<protein>
    <recommendedName>
        <fullName evidence="2">Large ribosomal subunit protein bL32</fullName>
    </recommendedName>
    <alternativeName>
        <fullName>50S ribosomal protein L32</fullName>
    </alternativeName>
</protein>
<proteinExistence type="inferred from homology"/>
<sequence>MAVPRANTSKARTRRRRAVNMRLEAPHLVECGNCGNFVQSHRVCGRCGFYRGRQVINPDDLC</sequence>
<evidence type="ECO:0000250" key="1"/>
<evidence type="ECO:0000305" key="2"/>
<accession>O83785</accession>
<keyword id="KW-1185">Reference proteome</keyword>
<keyword id="KW-0687">Ribonucleoprotein</keyword>
<keyword id="KW-0689">Ribosomal protein</keyword>
<organism>
    <name type="scientific">Treponema pallidum (strain Nichols)</name>
    <dbReference type="NCBI Taxonomy" id="243276"/>
    <lineage>
        <taxon>Bacteria</taxon>
        <taxon>Pseudomonadati</taxon>
        <taxon>Spirochaetota</taxon>
        <taxon>Spirochaetia</taxon>
        <taxon>Spirochaetales</taxon>
        <taxon>Treponemataceae</taxon>
        <taxon>Treponema</taxon>
    </lineage>
</organism>
<dbReference type="EMBL" id="AE000520">
    <property type="protein sequence ID" value="AAC65776.1"/>
    <property type="molecule type" value="Genomic_DNA"/>
</dbReference>
<dbReference type="PIR" id="E71277">
    <property type="entry name" value="E71277"/>
</dbReference>
<dbReference type="RefSeq" id="WP_010882252.1">
    <property type="nucleotide sequence ID" value="NC_021490.2"/>
</dbReference>
<dbReference type="SMR" id="O83785"/>
<dbReference type="IntAct" id="O83785">
    <property type="interactions" value="23"/>
</dbReference>
<dbReference type="STRING" id="243276.TP_0807"/>
<dbReference type="EnsemblBacteria" id="AAC65776">
    <property type="protein sequence ID" value="AAC65776"/>
    <property type="gene ID" value="TP_0807"/>
</dbReference>
<dbReference type="GeneID" id="93876568"/>
<dbReference type="KEGG" id="tpa:TP_0807"/>
<dbReference type="KEGG" id="tpw:TPANIC_0807"/>
<dbReference type="eggNOG" id="COG0333">
    <property type="taxonomic scope" value="Bacteria"/>
</dbReference>
<dbReference type="HOGENOM" id="CLU_129084_1_0_12"/>
<dbReference type="OrthoDB" id="9812874at2"/>
<dbReference type="Proteomes" id="UP000000811">
    <property type="component" value="Chromosome"/>
</dbReference>
<dbReference type="GO" id="GO:0015934">
    <property type="term" value="C:large ribosomal subunit"/>
    <property type="evidence" value="ECO:0007669"/>
    <property type="project" value="InterPro"/>
</dbReference>
<dbReference type="GO" id="GO:0003735">
    <property type="term" value="F:structural constituent of ribosome"/>
    <property type="evidence" value="ECO:0007669"/>
    <property type="project" value="InterPro"/>
</dbReference>
<dbReference type="GO" id="GO:0006412">
    <property type="term" value="P:translation"/>
    <property type="evidence" value="ECO:0007669"/>
    <property type="project" value="UniProtKB-UniRule"/>
</dbReference>
<dbReference type="HAMAP" id="MF_00340">
    <property type="entry name" value="Ribosomal_bL32"/>
    <property type="match status" value="1"/>
</dbReference>
<dbReference type="InterPro" id="IPR002677">
    <property type="entry name" value="Ribosomal_bL32"/>
</dbReference>
<dbReference type="InterPro" id="IPR044957">
    <property type="entry name" value="Ribosomal_bL32_bact"/>
</dbReference>
<dbReference type="InterPro" id="IPR011332">
    <property type="entry name" value="Ribosomal_zn-bd"/>
</dbReference>
<dbReference type="NCBIfam" id="TIGR01031">
    <property type="entry name" value="rpmF_bact"/>
    <property type="match status" value="1"/>
</dbReference>
<dbReference type="PANTHER" id="PTHR35534">
    <property type="entry name" value="50S RIBOSOMAL PROTEIN L32"/>
    <property type="match status" value="1"/>
</dbReference>
<dbReference type="PANTHER" id="PTHR35534:SF1">
    <property type="entry name" value="LARGE RIBOSOMAL SUBUNIT PROTEIN BL32"/>
    <property type="match status" value="1"/>
</dbReference>
<dbReference type="Pfam" id="PF01783">
    <property type="entry name" value="Ribosomal_L32p"/>
    <property type="match status" value="1"/>
</dbReference>
<dbReference type="SUPFAM" id="SSF57829">
    <property type="entry name" value="Zn-binding ribosomal proteins"/>
    <property type="match status" value="1"/>
</dbReference>
<name>RL32_TREPA</name>
<comment type="similarity">
    <text evidence="2">Belongs to the bacterial ribosomal protein bL32 family.</text>
</comment>
<gene>
    <name type="primary">rpmF</name>
    <name type="ordered locus">TP_0807</name>
</gene>
<feature type="initiator methionine" description="Removed" evidence="1">
    <location>
        <position position="1"/>
    </location>
</feature>
<feature type="chain" id="PRO_0000172429" description="Large ribosomal subunit protein bL32">
    <location>
        <begin position="2"/>
        <end position="62"/>
    </location>
</feature>
<reference key="1">
    <citation type="journal article" date="1998" name="Science">
        <title>Complete genome sequence of Treponema pallidum, the syphilis spirochete.</title>
        <authorList>
            <person name="Fraser C.M."/>
            <person name="Norris S.J."/>
            <person name="Weinstock G.M."/>
            <person name="White O."/>
            <person name="Sutton G.G."/>
            <person name="Dodson R.J."/>
            <person name="Gwinn M.L."/>
            <person name="Hickey E.K."/>
            <person name="Clayton R.A."/>
            <person name="Ketchum K.A."/>
            <person name="Sodergren E."/>
            <person name="Hardham J.M."/>
            <person name="McLeod M.P."/>
            <person name="Salzberg S.L."/>
            <person name="Peterson J.D."/>
            <person name="Khalak H.G."/>
            <person name="Richardson D.L."/>
            <person name="Howell J.K."/>
            <person name="Chidambaram M."/>
            <person name="Utterback T.R."/>
            <person name="McDonald L.A."/>
            <person name="Artiach P."/>
            <person name="Bowman C."/>
            <person name="Cotton M.D."/>
            <person name="Fujii C."/>
            <person name="Garland S.A."/>
            <person name="Hatch B."/>
            <person name="Horst K."/>
            <person name="Roberts K.M."/>
            <person name="Sandusky M."/>
            <person name="Weidman J.F."/>
            <person name="Smith H.O."/>
            <person name="Venter J.C."/>
        </authorList>
    </citation>
    <scope>NUCLEOTIDE SEQUENCE [LARGE SCALE GENOMIC DNA]</scope>
    <source>
        <strain>Nichols</strain>
    </source>
</reference>